<reference key="1">
    <citation type="submission" date="2006-07" db="EMBL/GenBank/DDBJ databases">
        <authorList>
            <consortium name="NIH - Xenopus Gene Collection (XGC) project"/>
        </authorList>
    </citation>
    <scope>NUCLEOTIDE SEQUENCE [LARGE SCALE MRNA]</scope>
    <source>
        <tissue>Testis</tissue>
    </source>
</reference>
<gene>
    <name type="primary">qrsl1</name>
</gene>
<keyword id="KW-0067">ATP-binding</keyword>
<keyword id="KW-0436">Ligase</keyword>
<keyword id="KW-0496">Mitochondrion</keyword>
<keyword id="KW-0547">Nucleotide-binding</keyword>
<keyword id="KW-0648">Protein biosynthesis</keyword>
<keyword id="KW-1185">Reference proteome</keyword>
<name>GATA_XENTR</name>
<proteinExistence type="evidence at transcript level"/>
<organism>
    <name type="scientific">Xenopus tropicalis</name>
    <name type="common">Western clawed frog</name>
    <name type="synonym">Silurana tropicalis</name>
    <dbReference type="NCBI Taxonomy" id="8364"/>
    <lineage>
        <taxon>Eukaryota</taxon>
        <taxon>Metazoa</taxon>
        <taxon>Chordata</taxon>
        <taxon>Craniata</taxon>
        <taxon>Vertebrata</taxon>
        <taxon>Euteleostomi</taxon>
        <taxon>Amphibia</taxon>
        <taxon>Batrachia</taxon>
        <taxon>Anura</taxon>
        <taxon>Pipoidea</taxon>
        <taxon>Pipidae</taxon>
        <taxon>Xenopodinae</taxon>
        <taxon>Xenopus</taxon>
        <taxon>Silurana</taxon>
    </lineage>
</organism>
<protein>
    <recommendedName>
        <fullName evidence="1">Glutamyl-tRNA(Gln) amidotransferase subunit A, mitochondrial</fullName>
        <shortName evidence="1">Glu-AdT subunit A</shortName>
        <ecNumber evidence="1">6.3.5.7</ecNumber>
    </recommendedName>
    <alternativeName>
        <fullName evidence="1">Glutaminyl-tRNA synthase-like protein 1</fullName>
    </alternativeName>
</protein>
<accession>Q0VFI5</accession>
<sequence>MLGMSLREAAAALRLGQIKPTELCQKCLSFIKETSFLNAYITVTEDFALKQAAEADERFIQGKPLGDLDGIPIAIKDNFSTAGIETTCASRMLKGYIAPYNATVVQKLFDQGAVFMGKTNLDEFAMGSGSTDSIFGPVKNPWSYSRSYIDKTSLSHHAAKDDSDWVITGGSSGGSACAVSAGTCYLAIGSDTGGSTRNPASHCGVVGLKPTYGLVSRHGLIPLVNSMDVPGIVTRCVDDAATVLGVLAGHDPYDSTTIQDPFQPFSLPEKVDVRNVCIGIPKEYHAPGLSAEILSLWSETADLLENAGAKVVEVSLPHTPYSIVCYHVLCTAEVASNMARFDGLEYGHRSDIDDSTEALYAATRREGFNEVVRGRILSGNYFLLKRNYEKYFVKAQKVRRLIADDFVKVFNSGVHVLLTPTTLGDAAPYLEFIQEDNRTRSAQEDVFTQCANMAGLPAVTVPAALSSRGLPLGLQFIGRAFCEQQLLTIAKWFEKQIDFSPLQFNRDSENGNIVQQYSKSASSV</sequence>
<dbReference type="EC" id="6.3.5.7" evidence="1"/>
<dbReference type="EMBL" id="BC118816">
    <property type="protein sequence ID" value="AAI18817.1"/>
    <property type="molecule type" value="mRNA"/>
</dbReference>
<dbReference type="RefSeq" id="NP_001072779.1">
    <property type="nucleotide sequence ID" value="NM_001079311.1"/>
</dbReference>
<dbReference type="SMR" id="Q0VFI5"/>
<dbReference type="FunCoup" id="Q0VFI5">
    <property type="interactions" value="958"/>
</dbReference>
<dbReference type="STRING" id="8364.ENSXETP00000012373"/>
<dbReference type="PaxDb" id="8364-ENSXETP00000041743"/>
<dbReference type="GeneID" id="780239"/>
<dbReference type="KEGG" id="xtr:780239"/>
<dbReference type="AGR" id="Xenbase:XB-GENE-5787967"/>
<dbReference type="CTD" id="55278"/>
<dbReference type="Xenbase" id="XB-GENE-5787967">
    <property type="gene designation" value="qrsl1"/>
</dbReference>
<dbReference type="eggNOG" id="KOG1211">
    <property type="taxonomic scope" value="Eukaryota"/>
</dbReference>
<dbReference type="HOGENOM" id="CLU_009600_7_6_1"/>
<dbReference type="InParanoid" id="Q0VFI5"/>
<dbReference type="OMA" id="QPASYCG"/>
<dbReference type="OrthoDB" id="421993at2759"/>
<dbReference type="PhylomeDB" id="Q0VFI5"/>
<dbReference type="Proteomes" id="UP000008143">
    <property type="component" value="Chromosome 5"/>
</dbReference>
<dbReference type="Bgee" id="ENSXETG00000027717">
    <property type="expression patterns" value="Expressed in testis and 13 other cell types or tissues"/>
</dbReference>
<dbReference type="ExpressionAtlas" id="Q0VFI5">
    <property type="expression patterns" value="differential"/>
</dbReference>
<dbReference type="GO" id="GO:0030956">
    <property type="term" value="C:glutamyl-tRNA(Gln) amidotransferase complex"/>
    <property type="evidence" value="ECO:0007669"/>
    <property type="project" value="UniProtKB-UniRule"/>
</dbReference>
<dbReference type="GO" id="GO:0005739">
    <property type="term" value="C:mitochondrion"/>
    <property type="evidence" value="ECO:0007669"/>
    <property type="project" value="UniProtKB-SubCell"/>
</dbReference>
<dbReference type="GO" id="GO:0005524">
    <property type="term" value="F:ATP binding"/>
    <property type="evidence" value="ECO:0007669"/>
    <property type="project" value="UniProtKB-KW"/>
</dbReference>
<dbReference type="GO" id="GO:0050567">
    <property type="term" value="F:glutaminyl-tRNA synthase (glutamine-hydrolyzing) activity"/>
    <property type="evidence" value="ECO:0007669"/>
    <property type="project" value="UniProtKB-UniRule"/>
</dbReference>
<dbReference type="GO" id="GO:0070681">
    <property type="term" value="P:glutaminyl-tRNAGln biosynthesis via transamidation"/>
    <property type="evidence" value="ECO:0007669"/>
    <property type="project" value="UniProtKB-UniRule"/>
</dbReference>
<dbReference type="GO" id="GO:0032543">
    <property type="term" value="P:mitochondrial translation"/>
    <property type="evidence" value="ECO:0007669"/>
    <property type="project" value="UniProtKB-UniRule"/>
</dbReference>
<dbReference type="FunFam" id="3.90.1300.10:FF:000002">
    <property type="entry name" value="Glutamyl-tRNA(Gln) amidotransferase subunit A, mitochondrial"/>
    <property type="match status" value="1"/>
</dbReference>
<dbReference type="Gene3D" id="3.90.1300.10">
    <property type="entry name" value="Amidase signature (AS) domain"/>
    <property type="match status" value="1"/>
</dbReference>
<dbReference type="HAMAP" id="MF_00120">
    <property type="entry name" value="GatA"/>
    <property type="match status" value="1"/>
</dbReference>
<dbReference type="InterPro" id="IPR000120">
    <property type="entry name" value="Amidase"/>
</dbReference>
<dbReference type="InterPro" id="IPR023631">
    <property type="entry name" value="Amidase_dom"/>
</dbReference>
<dbReference type="InterPro" id="IPR036928">
    <property type="entry name" value="AS_sf"/>
</dbReference>
<dbReference type="InterPro" id="IPR004412">
    <property type="entry name" value="GatA"/>
</dbReference>
<dbReference type="PANTHER" id="PTHR11895:SF7">
    <property type="entry name" value="GLUTAMYL-TRNA(GLN) AMIDOTRANSFERASE SUBUNIT A, MITOCHONDRIAL"/>
    <property type="match status" value="1"/>
</dbReference>
<dbReference type="PANTHER" id="PTHR11895">
    <property type="entry name" value="TRANSAMIDASE"/>
    <property type="match status" value="1"/>
</dbReference>
<dbReference type="Pfam" id="PF01425">
    <property type="entry name" value="Amidase"/>
    <property type="match status" value="2"/>
</dbReference>
<dbReference type="SUPFAM" id="SSF75304">
    <property type="entry name" value="Amidase signature (AS) enzymes"/>
    <property type="match status" value="1"/>
</dbReference>
<evidence type="ECO:0000255" key="1">
    <source>
        <dbReference type="HAMAP-Rule" id="MF_03150"/>
    </source>
</evidence>
<feature type="chain" id="PRO_0000316772" description="Glutamyl-tRNA(Gln) amidotransferase subunit A, mitochondrial">
    <location>
        <begin position="1"/>
        <end position="524"/>
    </location>
</feature>
<feature type="active site" description="Charge relay system" evidence="1">
    <location>
        <position position="76"/>
    </location>
</feature>
<feature type="active site" description="Charge relay system" evidence="1">
    <location>
        <position position="171"/>
    </location>
</feature>
<feature type="active site" description="Acyl-ester intermediate" evidence="1">
    <location>
        <position position="195"/>
    </location>
</feature>
<comment type="function">
    <text evidence="1">Allows the formation of correctly charged Gln-tRNA(Gln) through the transamidation of misacylated Glu-tRNA(Gln) in the mitochondria. The reaction takes place in the presence of glutamine and ATP through an activated gamma-phospho-Glu-tRNA(Gln).</text>
</comment>
<comment type="catalytic activity">
    <reaction evidence="1">
        <text>L-glutamyl-tRNA(Gln) + L-glutamine + ATP + H2O = L-glutaminyl-tRNA(Gln) + L-glutamate + ADP + phosphate + H(+)</text>
        <dbReference type="Rhea" id="RHEA:17521"/>
        <dbReference type="Rhea" id="RHEA-COMP:9681"/>
        <dbReference type="Rhea" id="RHEA-COMP:9684"/>
        <dbReference type="ChEBI" id="CHEBI:15377"/>
        <dbReference type="ChEBI" id="CHEBI:15378"/>
        <dbReference type="ChEBI" id="CHEBI:29985"/>
        <dbReference type="ChEBI" id="CHEBI:30616"/>
        <dbReference type="ChEBI" id="CHEBI:43474"/>
        <dbReference type="ChEBI" id="CHEBI:58359"/>
        <dbReference type="ChEBI" id="CHEBI:78520"/>
        <dbReference type="ChEBI" id="CHEBI:78521"/>
        <dbReference type="ChEBI" id="CHEBI:456216"/>
        <dbReference type="EC" id="6.3.5.7"/>
    </reaction>
</comment>
<comment type="subunit">
    <text evidence="1">Subunit of the heterotrimeric GatCAB amidotransferase (AdT) complex, composed of A (qrsl1), B (gatb) and C (gatc) subunits.</text>
</comment>
<comment type="subcellular location">
    <subcellularLocation>
        <location evidence="1">Mitochondrion</location>
    </subcellularLocation>
</comment>
<comment type="similarity">
    <text evidence="1">Belongs to the amidase family. GatA subfamily.</text>
</comment>